<keyword id="KW-0067">ATP-binding</keyword>
<keyword id="KW-0460">Magnesium</keyword>
<keyword id="KW-0547">Nucleotide-binding</keyword>
<keyword id="KW-0808">Transferase</keyword>
<keyword id="KW-0819">tRNA processing</keyword>
<sequence>MTKLIVICGATATGKSGLALNLAMRLGSVILSADSRQVYREFDIGTAKPTLAEQKAVPHYLIDICTPRETMTVADYQEQAQALINSLPVSPLLLVGGTGLYIRSIVQGMKIPRVAPNYELRSQLESLGQTTLYGILQQVDPVAAQKIHPHDPVRTLRAVEVFYVTGIPISAQQGENPPDYPILQIGLDCEMERLSERIHKRTEQMIADGLVGEVEYLCQKYGADLPLLNTLGYQEIKQYLAGEISLEAAKELIVLHTRQFAKRQRTWFRAYPQIEWFNADDADLLDIVWQRIQQ</sequence>
<protein>
    <recommendedName>
        <fullName evidence="1">tRNA dimethylallyltransferase</fullName>
        <ecNumber evidence="1">2.5.1.75</ecNumber>
    </recommendedName>
    <alternativeName>
        <fullName evidence="1">Dimethylallyl diphosphate:tRNA dimethylallyltransferase</fullName>
        <shortName evidence="1">DMAPP:tRNA dimethylallyltransferase</shortName>
        <shortName evidence="1">DMATase</shortName>
    </alternativeName>
    <alternativeName>
        <fullName evidence="1">Isopentenyl-diphosphate:tRNA isopentenyltransferase</fullName>
        <shortName evidence="1">IPP transferase</shortName>
        <shortName evidence="1">IPPT</shortName>
        <shortName evidence="1">IPTase</shortName>
    </alternativeName>
</protein>
<dbReference type="EC" id="2.5.1.75" evidence="1"/>
<dbReference type="EMBL" id="CP000117">
    <property type="protein sequence ID" value="ABA22133.1"/>
    <property type="molecule type" value="Genomic_DNA"/>
</dbReference>
<dbReference type="SMR" id="Q3MA53"/>
<dbReference type="STRING" id="240292.Ava_2518"/>
<dbReference type="KEGG" id="ava:Ava_2518"/>
<dbReference type="eggNOG" id="COG0324">
    <property type="taxonomic scope" value="Bacteria"/>
</dbReference>
<dbReference type="HOGENOM" id="CLU_032616_0_1_3"/>
<dbReference type="Proteomes" id="UP000002533">
    <property type="component" value="Chromosome"/>
</dbReference>
<dbReference type="GO" id="GO:0005524">
    <property type="term" value="F:ATP binding"/>
    <property type="evidence" value="ECO:0007669"/>
    <property type="project" value="UniProtKB-UniRule"/>
</dbReference>
<dbReference type="GO" id="GO:0052381">
    <property type="term" value="F:tRNA dimethylallyltransferase activity"/>
    <property type="evidence" value="ECO:0007669"/>
    <property type="project" value="UniProtKB-UniRule"/>
</dbReference>
<dbReference type="GO" id="GO:0006400">
    <property type="term" value="P:tRNA modification"/>
    <property type="evidence" value="ECO:0007669"/>
    <property type="project" value="TreeGrafter"/>
</dbReference>
<dbReference type="Gene3D" id="1.10.20.140">
    <property type="match status" value="1"/>
</dbReference>
<dbReference type="Gene3D" id="3.40.50.300">
    <property type="entry name" value="P-loop containing nucleotide triphosphate hydrolases"/>
    <property type="match status" value="1"/>
</dbReference>
<dbReference type="HAMAP" id="MF_00185">
    <property type="entry name" value="IPP_trans"/>
    <property type="match status" value="1"/>
</dbReference>
<dbReference type="InterPro" id="IPR039657">
    <property type="entry name" value="Dimethylallyltransferase"/>
</dbReference>
<dbReference type="InterPro" id="IPR018022">
    <property type="entry name" value="IPT"/>
</dbReference>
<dbReference type="InterPro" id="IPR027417">
    <property type="entry name" value="P-loop_NTPase"/>
</dbReference>
<dbReference type="NCBIfam" id="TIGR00174">
    <property type="entry name" value="miaA"/>
    <property type="match status" value="1"/>
</dbReference>
<dbReference type="PANTHER" id="PTHR11088">
    <property type="entry name" value="TRNA DIMETHYLALLYLTRANSFERASE"/>
    <property type="match status" value="1"/>
</dbReference>
<dbReference type="PANTHER" id="PTHR11088:SF60">
    <property type="entry name" value="TRNA DIMETHYLALLYLTRANSFERASE"/>
    <property type="match status" value="1"/>
</dbReference>
<dbReference type="Pfam" id="PF01715">
    <property type="entry name" value="IPPT"/>
    <property type="match status" value="1"/>
</dbReference>
<dbReference type="SUPFAM" id="SSF52540">
    <property type="entry name" value="P-loop containing nucleoside triphosphate hydrolases"/>
    <property type="match status" value="2"/>
</dbReference>
<comment type="function">
    <text evidence="1">Catalyzes the transfer of a dimethylallyl group onto the adenine at position 37 in tRNAs that read codons beginning with uridine, leading to the formation of N6-(dimethylallyl)adenosine (i(6)A).</text>
</comment>
<comment type="catalytic activity">
    <reaction evidence="1">
        <text>adenosine(37) in tRNA + dimethylallyl diphosphate = N(6)-dimethylallyladenosine(37) in tRNA + diphosphate</text>
        <dbReference type="Rhea" id="RHEA:26482"/>
        <dbReference type="Rhea" id="RHEA-COMP:10162"/>
        <dbReference type="Rhea" id="RHEA-COMP:10375"/>
        <dbReference type="ChEBI" id="CHEBI:33019"/>
        <dbReference type="ChEBI" id="CHEBI:57623"/>
        <dbReference type="ChEBI" id="CHEBI:74411"/>
        <dbReference type="ChEBI" id="CHEBI:74415"/>
        <dbReference type="EC" id="2.5.1.75"/>
    </reaction>
</comment>
<comment type="cofactor">
    <cofactor evidence="1">
        <name>Mg(2+)</name>
        <dbReference type="ChEBI" id="CHEBI:18420"/>
    </cofactor>
</comment>
<comment type="subunit">
    <text evidence="1">Monomer.</text>
</comment>
<comment type="similarity">
    <text evidence="1">Belongs to the IPP transferase family.</text>
</comment>
<proteinExistence type="inferred from homology"/>
<feature type="chain" id="PRO_1000020560" description="tRNA dimethylallyltransferase">
    <location>
        <begin position="1"/>
        <end position="294"/>
    </location>
</feature>
<feature type="region of interest" description="Interaction with substrate tRNA" evidence="1">
    <location>
        <begin position="34"/>
        <end position="37"/>
    </location>
</feature>
<feature type="binding site" evidence="1">
    <location>
        <begin position="9"/>
        <end position="16"/>
    </location>
    <ligand>
        <name>ATP</name>
        <dbReference type="ChEBI" id="CHEBI:30616"/>
    </ligand>
</feature>
<feature type="binding site" evidence="1">
    <location>
        <begin position="11"/>
        <end position="16"/>
    </location>
    <ligand>
        <name>substrate</name>
    </ligand>
</feature>
<feature type="site" description="Interaction with substrate tRNA" evidence="1">
    <location>
        <position position="98"/>
    </location>
</feature>
<organism>
    <name type="scientific">Trichormus variabilis (strain ATCC 29413 / PCC 7937)</name>
    <name type="common">Anabaena variabilis</name>
    <dbReference type="NCBI Taxonomy" id="240292"/>
    <lineage>
        <taxon>Bacteria</taxon>
        <taxon>Bacillati</taxon>
        <taxon>Cyanobacteriota</taxon>
        <taxon>Cyanophyceae</taxon>
        <taxon>Nostocales</taxon>
        <taxon>Nostocaceae</taxon>
        <taxon>Trichormus</taxon>
    </lineage>
</organism>
<name>MIAA_TRIV2</name>
<evidence type="ECO:0000255" key="1">
    <source>
        <dbReference type="HAMAP-Rule" id="MF_00185"/>
    </source>
</evidence>
<reference key="1">
    <citation type="journal article" date="2014" name="Stand. Genomic Sci.">
        <title>Complete genome sequence of Anabaena variabilis ATCC 29413.</title>
        <authorList>
            <person name="Thiel T."/>
            <person name="Pratte B.S."/>
            <person name="Zhong J."/>
            <person name="Goodwin L."/>
            <person name="Copeland A."/>
            <person name="Lucas S."/>
            <person name="Han C."/>
            <person name="Pitluck S."/>
            <person name="Land M.L."/>
            <person name="Kyrpides N.C."/>
            <person name="Woyke T."/>
        </authorList>
    </citation>
    <scope>NUCLEOTIDE SEQUENCE [LARGE SCALE GENOMIC DNA]</scope>
    <source>
        <strain>ATCC 29413 / PCC 7937</strain>
    </source>
</reference>
<gene>
    <name evidence="1" type="primary">miaA</name>
    <name type="ordered locus">Ava_2518</name>
</gene>
<accession>Q3MA53</accession>